<sequence length="188" mass="20743">MKVIASTLRKGNVVDKDGKLYVILTAENIHPGKGTPVTQLDMRRITDGVKISERYRTTEQVERAFVEDRDHTFLYQDGEGYHFMNPESYEQIAVPADVVGDAAPYLQEGMTVTLSTHNGVPLTIELPQRMTFEIVETEPVTKGQTASSSYKPALLSNGVKTSVPPHVSTGTRVVIMTADGSYVERAKD</sequence>
<accession>B7KT38</accession>
<feature type="chain" id="PRO_1000123016" description="Elongation factor P">
    <location>
        <begin position="1"/>
        <end position="188"/>
    </location>
</feature>
<protein>
    <recommendedName>
        <fullName evidence="1">Elongation factor P</fullName>
        <shortName evidence="1">EF-P</shortName>
    </recommendedName>
</protein>
<gene>
    <name evidence="1" type="primary">efp</name>
    <name type="ordered locus">Mchl_3230</name>
</gene>
<evidence type="ECO:0000255" key="1">
    <source>
        <dbReference type="HAMAP-Rule" id="MF_00141"/>
    </source>
</evidence>
<organism>
    <name type="scientific">Methylorubrum extorquens (strain CM4 / NCIMB 13688)</name>
    <name type="common">Methylobacterium extorquens</name>
    <dbReference type="NCBI Taxonomy" id="440085"/>
    <lineage>
        <taxon>Bacteria</taxon>
        <taxon>Pseudomonadati</taxon>
        <taxon>Pseudomonadota</taxon>
        <taxon>Alphaproteobacteria</taxon>
        <taxon>Hyphomicrobiales</taxon>
        <taxon>Methylobacteriaceae</taxon>
        <taxon>Methylorubrum</taxon>
    </lineage>
</organism>
<name>EFP_METC4</name>
<proteinExistence type="inferred from homology"/>
<dbReference type="EMBL" id="CP001298">
    <property type="protein sequence ID" value="ACK84068.1"/>
    <property type="molecule type" value="Genomic_DNA"/>
</dbReference>
<dbReference type="RefSeq" id="WP_003599274.1">
    <property type="nucleotide sequence ID" value="NC_011757.1"/>
</dbReference>
<dbReference type="SMR" id="B7KT38"/>
<dbReference type="GeneID" id="72990651"/>
<dbReference type="KEGG" id="mch:Mchl_3230"/>
<dbReference type="HOGENOM" id="CLU_074944_1_1_5"/>
<dbReference type="UniPathway" id="UPA00345"/>
<dbReference type="Proteomes" id="UP000002385">
    <property type="component" value="Chromosome"/>
</dbReference>
<dbReference type="GO" id="GO:0005737">
    <property type="term" value="C:cytoplasm"/>
    <property type="evidence" value="ECO:0007669"/>
    <property type="project" value="UniProtKB-SubCell"/>
</dbReference>
<dbReference type="GO" id="GO:0003746">
    <property type="term" value="F:translation elongation factor activity"/>
    <property type="evidence" value="ECO:0007669"/>
    <property type="project" value="UniProtKB-UniRule"/>
</dbReference>
<dbReference type="GO" id="GO:0043043">
    <property type="term" value="P:peptide biosynthetic process"/>
    <property type="evidence" value="ECO:0007669"/>
    <property type="project" value="InterPro"/>
</dbReference>
<dbReference type="CDD" id="cd04470">
    <property type="entry name" value="S1_EF-P_repeat_1"/>
    <property type="match status" value="1"/>
</dbReference>
<dbReference type="CDD" id="cd05794">
    <property type="entry name" value="S1_EF-P_repeat_2"/>
    <property type="match status" value="1"/>
</dbReference>
<dbReference type="FunFam" id="2.40.50.140:FF:000004">
    <property type="entry name" value="Elongation factor P"/>
    <property type="match status" value="1"/>
</dbReference>
<dbReference type="FunFam" id="2.40.50.140:FF:000009">
    <property type="entry name" value="Elongation factor P"/>
    <property type="match status" value="1"/>
</dbReference>
<dbReference type="Gene3D" id="2.30.30.30">
    <property type="match status" value="1"/>
</dbReference>
<dbReference type="Gene3D" id="2.40.50.140">
    <property type="entry name" value="Nucleic acid-binding proteins"/>
    <property type="match status" value="2"/>
</dbReference>
<dbReference type="HAMAP" id="MF_00141">
    <property type="entry name" value="EF_P"/>
    <property type="match status" value="1"/>
</dbReference>
<dbReference type="InterPro" id="IPR015365">
    <property type="entry name" value="Elong-fact-P_C"/>
</dbReference>
<dbReference type="InterPro" id="IPR012340">
    <property type="entry name" value="NA-bd_OB-fold"/>
</dbReference>
<dbReference type="InterPro" id="IPR014722">
    <property type="entry name" value="Rib_uL2_dom2"/>
</dbReference>
<dbReference type="InterPro" id="IPR020599">
    <property type="entry name" value="Transl_elong_fac_P/YeiP"/>
</dbReference>
<dbReference type="InterPro" id="IPR013185">
    <property type="entry name" value="Transl_elong_KOW-like"/>
</dbReference>
<dbReference type="InterPro" id="IPR001059">
    <property type="entry name" value="Transl_elong_P/YeiP_cen"/>
</dbReference>
<dbReference type="InterPro" id="IPR013852">
    <property type="entry name" value="Transl_elong_P/YeiP_CS"/>
</dbReference>
<dbReference type="InterPro" id="IPR011768">
    <property type="entry name" value="Transl_elongation_fac_P"/>
</dbReference>
<dbReference type="InterPro" id="IPR008991">
    <property type="entry name" value="Translation_prot_SH3-like_sf"/>
</dbReference>
<dbReference type="NCBIfam" id="TIGR00038">
    <property type="entry name" value="efp"/>
    <property type="match status" value="1"/>
</dbReference>
<dbReference type="NCBIfam" id="NF001810">
    <property type="entry name" value="PRK00529.1"/>
    <property type="match status" value="1"/>
</dbReference>
<dbReference type="PANTHER" id="PTHR30053">
    <property type="entry name" value="ELONGATION FACTOR P"/>
    <property type="match status" value="1"/>
</dbReference>
<dbReference type="PANTHER" id="PTHR30053:SF14">
    <property type="entry name" value="TRANSLATION ELONGATION FACTOR KOW-LIKE DOMAIN-CONTAINING PROTEIN"/>
    <property type="match status" value="1"/>
</dbReference>
<dbReference type="Pfam" id="PF01132">
    <property type="entry name" value="EFP"/>
    <property type="match status" value="1"/>
</dbReference>
<dbReference type="Pfam" id="PF08207">
    <property type="entry name" value="EFP_N"/>
    <property type="match status" value="1"/>
</dbReference>
<dbReference type="Pfam" id="PF09285">
    <property type="entry name" value="Elong-fact-P_C"/>
    <property type="match status" value="1"/>
</dbReference>
<dbReference type="PIRSF" id="PIRSF005901">
    <property type="entry name" value="EF-P"/>
    <property type="match status" value="1"/>
</dbReference>
<dbReference type="SMART" id="SM01185">
    <property type="entry name" value="EFP"/>
    <property type="match status" value="1"/>
</dbReference>
<dbReference type="SMART" id="SM00841">
    <property type="entry name" value="Elong-fact-P_C"/>
    <property type="match status" value="1"/>
</dbReference>
<dbReference type="SUPFAM" id="SSF50249">
    <property type="entry name" value="Nucleic acid-binding proteins"/>
    <property type="match status" value="2"/>
</dbReference>
<dbReference type="SUPFAM" id="SSF50104">
    <property type="entry name" value="Translation proteins SH3-like domain"/>
    <property type="match status" value="1"/>
</dbReference>
<dbReference type="PROSITE" id="PS01275">
    <property type="entry name" value="EFP"/>
    <property type="match status" value="1"/>
</dbReference>
<reference key="1">
    <citation type="submission" date="2008-12" db="EMBL/GenBank/DDBJ databases">
        <title>Complete sequence of chromosome of Methylobacterium chloromethanicum CM4.</title>
        <authorList>
            <consortium name="US DOE Joint Genome Institute"/>
            <person name="Lucas S."/>
            <person name="Copeland A."/>
            <person name="Lapidus A."/>
            <person name="Glavina del Rio T."/>
            <person name="Dalin E."/>
            <person name="Tice H."/>
            <person name="Bruce D."/>
            <person name="Goodwin L."/>
            <person name="Pitluck S."/>
            <person name="Chertkov O."/>
            <person name="Brettin T."/>
            <person name="Detter J.C."/>
            <person name="Han C."/>
            <person name="Larimer F."/>
            <person name="Land M."/>
            <person name="Hauser L."/>
            <person name="Kyrpides N."/>
            <person name="Mikhailova N."/>
            <person name="Marx C."/>
            <person name="Richardson P."/>
        </authorList>
    </citation>
    <scope>NUCLEOTIDE SEQUENCE [LARGE SCALE GENOMIC DNA]</scope>
    <source>
        <strain>CM4 / NCIMB 13688</strain>
    </source>
</reference>
<keyword id="KW-0963">Cytoplasm</keyword>
<keyword id="KW-0251">Elongation factor</keyword>
<keyword id="KW-0648">Protein biosynthesis</keyword>
<comment type="function">
    <text evidence="1">Involved in peptide bond synthesis. Stimulates efficient translation and peptide-bond synthesis on native or reconstituted 70S ribosomes in vitro. Probably functions indirectly by altering the affinity of the ribosome for aminoacyl-tRNA, thus increasing their reactivity as acceptors for peptidyl transferase.</text>
</comment>
<comment type="pathway">
    <text evidence="1">Protein biosynthesis; polypeptide chain elongation.</text>
</comment>
<comment type="subcellular location">
    <subcellularLocation>
        <location evidence="1">Cytoplasm</location>
    </subcellularLocation>
</comment>
<comment type="similarity">
    <text evidence="1">Belongs to the elongation factor P family.</text>
</comment>